<comment type="function">
    <text evidence="1">DNA-dependent ATPase involved in processing of recombination intermediates, plays a role in repairing DNA breaks. Stimulates the branch migration of RecA-mediated strand transfer reactions, allowing the 3' invading strand to extend heteroduplex DNA faster. Binds ssDNA in the presence of ADP but not other nucleotides, has ATPase activity that is stimulated by ssDNA and various branched DNA structures, but inhibited by SSB. Does not have RecA's homology-searching function.</text>
</comment>
<comment type="domain">
    <text evidence="1">Has a putative N-terminal zinc-finger, a middle region with homology to RecA with ATPase motifs including the RadA KNRFG motif, while the C-terminus is homologous to Lon protease.</text>
</comment>
<comment type="similarity">
    <text evidence="1">Belongs to the RecA family. RadA subfamily.</text>
</comment>
<keyword id="KW-0067">ATP-binding</keyword>
<keyword id="KW-0227">DNA damage</keyword>
<keyword id="KW-0234">DNA repair</keyword>
<keyword id="KW-0238">DNA-binding</keyword>
<keyword id="KW-0378">Hydrolase</keyword>
<keyword id="KW-0479">Metal-binding</keyword>
<keyword id="KW-0547">Nucleotide-binding</keyword>
<keyword id="KW-1185">Reference proteome</keyword>
<keyword id="KW-0346">Stress response</keyword>
<keyword id="KW-0862">Zinc</keyword>
<keyword id="KW-0863">Zinc-finger</keyword>
<evidence type="ECO:0000255" key="1">
    <source>
        <dbReference type="HAMAP-Rule" id="MF_01498"/>
    </source>
</evidence>
<name>RADA_TREPA</name>
<proteinExistence type="inferred from homology"/>
<sequence>MAKKTERAFSCVGCGYVHPKWLGRCPECGEWNSFEETPSLSSGDVRAVKKASSSPVQAFPLCAVRAQDAQRISCGIAEFDRVLGGGAVRRSAIMIGGEPGIGKSTLLLQIAAACGKSVLYVSGEESPGQIRGRADRLNIPIQNIELLCATRVEDVERVLNTRCPTFVIVDSIQTVFSPEAGAIPMTINQLKYCANELIAWVKERDSVLFFTAHVTKDGNIAGPKVVEHMVDTVISFERNEEDIRFLRALKNRFGSVDELGIFTMGENGLSAVQDTAGFFISTRQGMFPVGSATVPVCEGSRVFMVEIQALTVPAKSSVTRVFSDRIDSARVSRVAAVIEKRVGLKFSDQDIYVNVAGGIRLYEPAVDVALAMALYSARQNTPVKTNAAFIGEVSLSGEIRPVRRLKTRLKTAYGLGFSTIYVPIGVEHDTPPPYTLRVVGTLAQTIAEIFSKAKA</sequence>
<accession>O83985</accession>
<gene>
    <name evidence="1" type="primary">radA</name>
    <name type="synonym">sms</name>
    <name type="ordered locus">TP_1022</name>
</gene>
<dbReference type="EC" id="3.6.4.-" evidence="1"/>
<dbReference type="EMBL" id="AE000520">
    <property type="protein sequence ID" value="AAC65973.1"/>
    <property type="molecule type" value="Genomic_DNA"/>
</dbReference>
<dbReference type="PIR" id="A71251">
    <property type="entry name" value="A71251"/>
</dbReference>
<dbReference type="RefSeq" id="WP_010882466.1">
    <property type="nucleotide sequence ID" value="NC_021490.2"/>
</dbReference>
<dbReference type="SMR" id="O83985"/>
<dbReference type="STRING" id="243276.TP_1022"/>
<dbReference type="EnsemblBacteria" id="AAC65973">
    <property type="protein sequence ID" value="AAC65973"/>
    <property type="gene ID" value="TP_1022"/>
</dbReference>
<dbReference type="GeneID" id="93876769"/>
<dbReference type="KEGG" id="tpa:TP_1022"/>
<dbReference type="KEGG" id="tpw:TPANIC_1022"/>
<dbReference type="eggNOG" id="COG1066">
    <property type="taxonomic scope" value="Bacteria"/>
</dbReference>
<dbReference type="HOGENOM" id="CLU_018264_0_0_12"/>
<dbReference type="OrthoDB" id="9803906at2"/>
<dbReference type="Proteomes" id="UP000000811">
    <property type="component" value="Chromosome"/>
</dbReference>
<dbReference type="GO" id="GO:0005829">
    <property type="term" value="C:cytosol"/>
    <property type="evidence" value="ECO:0007669"/>
    <property type="project" value="TreeGrafter"/>
</dbReference>
<dbReference type="GO" id="GO:0005524">
    <property type="term" value="F:ATP binding"/>
    <property type="evidence" value="ECO:0007669"/>
    <property type="project" value="UniProtKB-UniRule"/>
</dbReference>
<dbReference type="GO" id="GO:0016887">
    <property type="term" value="F:ATP hydrolysis activity"/>
    <property type="evidence" value="ECO:0007669"/>
    <property type="project" value="InterPro"/>
</dbReference>
<dbReference type="GO" id="GO:0140664">
    <property type="term" value="F:ATP-dependent DNA damage sensor activity"/>
    <property type="evidence" value="ECO:0007669"/>
    <property type="project" value="InterPro"/>
</dbReference>
<dbReference type="GO" id="GO:0003684">
    <property type="term" value="F:damaged DNA binding"/>
    <property type="evidence" value="ECO:0007669"/>
    <property type="project" value="InterPro"/>
</dbReference>
<dbReference type="GO" id="GO:0008270">
    <property type="term" value="F:zinc ion binding"/>
    <property type="evidence" value="ECO:0007669"/>
    <property type="project" value="UniProtKB-KW"/>
</dbReference>
<dbReference type="GO" id="GO:0000725">
    <property type="term" value="P:recombinational repair"/>
    <property type="evidence" value="ECO:0007669"/>
    <property type="project" value="UniProtKB-UniRule"/>
</dbReference>
<dbReference type="CDD" id="cd01121">
    <property type="entry name" value="RadA_SMS_N"/>
    <property type="match status" value="1"/>
</dbReference>
<dbReference type="Gene3D" id="3.30.230.10">
    <property type="match status" value="1"/>
</dbReference>
<dbReference type="Gene3D" id="3.40.50.300">
    <property type="entry name" value="P-loop containing nucleotide triphosphate hydrolases"/>
    <property type="match status" value="1"/>
</dbReference>
<dbReference type="HAMAP" id="MF_01498">
    <property type="entry name" value="RadA_bact"/>
    <property type="match status" value="1"/>
</dbReference>
<dbReference type="InterPro" id="IPR003593">
    <property type="entry name" value="AAA+_ATPase"/>
</dbReference>
<dbReference type="InterPro" id="IPR004504">
    <property type="entry name" value="DNA_repair_RadA"/>
</dbReference>
<dbReference type="InterPro" id="IPR014774">
    <property type="entry name" value="KaiC-like_dom"/>
</dbReference>
<dbReference type="InterPro" id="IPR027417">
    <property type="entry name" value="P-loop_NTPase"/>
</dbReference>
<dbReference type="InterPro" id="IPR020588">
    <property type="entry name" value="RecA_ATP-bd"/>
</dbReference>
<dbReference type="InterPro" id="IPR020568">
    <property type="entry name" value="Ribosomal_Su5_D2-typ_SF"/>
</dbReference>
<dbReference type="InterPro" id="IPR014721">
    <property type="entry name" value="Ribsml_uS5_D2-typ_fold_subgr"/>
</dbReference>
<dbReference type="InterPro" id="IPR041166">
    <property type="entry name" value="Rubredoxin_2"/>
</dbReference>
<dbReference type="NCBIfam" id="TIGR00416">
    <property type="entry name" value="sms"/>
    <property type="match status" value="1"/>
</dbReference>
<dbReference type="PANTHER" id="PTHR32472">
    <property type="entry name" value="DNA REPAIR PROTEIN RADA"/>
    <property type="match status" value="1"/>
</dbReference>
<dbReference type="PANTHER" id="PTHR32472:SF10">
    <property type="entry name" value="DNA REPAIR PROTEIN RADA-LIKE PROTEIN"/>
    <property type="match status" value="1"/>
</dbReference>
<dbReference type="Pfam" id="PF06745">
    <property type="entry name" value="ATPase"/>
    <property type="match status" value="1"/>
</dbReference>
<dbReference type="Pfam" id="PF13541">
    <property type="entry name" value="ChlI"/>
    <property type="match status" value="1"/>
</dbReference>
<dbReference type="Pfam" id="PF18073">
    <property type="entry name" value="Zn_ribbon_LapB"/>
    <property type="match status" value="1"/>
</dbReference>
<dbReference type="PRINTS" id="PR01874">
    <property type="entry name" value="DNAREPAIRADA"/>
</dbReference>
<dbReference type="SMART" id="SM00382">
    <property type="entry name" value="AAA"/>
    <property type="match status" value="1"/>
</dbReference>
<dbReference type="SUPFAM" id="SSF52540">
    <property type="entry name" value="P-loop containing nucleoside triphosphate hydrolases"/>
    <property type="match status" value="1"/>
</dbReference>
<dbReference type="SUPFAM" id="SSF54211">
    <property type="entry name" value="Ribosomal protein S5 domain 2-like"/>
    <property type="match status" value="1"/>
</dbReference>
<dbReference type="PROSITE" id="PS50162">
    <property type="entry name" value="RECA_2"/>
    <property type="match status" value="1"/>
</dbReference>
<protein>
    <recommendedName>
        <fullName evidence="1">DNA repair protein RadA</fullName>
        <ecNumber evidence="1">3.6.4.-</ecNumber>
    </recommendedName>
    <alternativeName>
        <fullName evidence="1">Branch migration protein RadA</fullName>
    </alternativeName>
</protein>
<reference key="1">
    <citation type="journal article" date="1998" name="Science">
        <title>Complete genome sequence of Treponema pallidum, the syphilis spirochete.</title>
        <authorList>
            <person name="Fraser C.M."/>
            <person name="Norris S.J."/>
            <person name="Weinstock G.M."/>
            <person name="White O."/>
            <person name="Sutton G.G."/>
            <person name="Dodson R.J."/>
            <person name="Gwinn M.L."/>
            <person name="Hickey E.K."/>
            <person name="Clayton R.A."/>
            <person name="Ketchum K.A."/>
            <person name="Sodergren E."/>
            <person name="Hardham J.M."/>
            <person name="McLeod M.P."/>
            <person name="Salzberg S.L."/>
            <person name="Peterson J.D."/>
            <person name="Khalak H.G."/>
            <person name="Richardson D.L."/>
            <person name="Howell J.K."/>
            <person name="Chidambaram M."/>
            <person name="Utterback T.R."/>
            <person name="McDonald L.A."/>
            <person name="Artiach P."/>
            <person name="Bowman C."/>
            <person name="Cotton M.D."/>
            <person name="Fujii C."/>
            <person name="Garland S.A."/>
            <person name="Hatch B."/>
            <person name="Horst K."/>
            <person name="Roberts K.M."/>
            <person name="Sandusky M."/>
            <person name="Weidman J.F."/>
            <person name="Smith H.O."/>
            <person name="Venter J.C."/>
        </authorList>
    </citation>
    <scope>NUCLEOTIDE SEQUENCE [LARGE SCALE GENOMIC DNA]</scope>
    <source>
        <strain>Nichols</strain>
    </source>
</reference>
<feature type="chain" id="PRO_0000187943" description="DNA repair protein RadA">
    <location>
        <begin position="1"/>
        <end position="455"/>
    </location>
</feature>
<feature type="zinc finger region" description="C4-type" evidence="1">
    <location>
        <begin position="11"/>
        <end position="28"/>
    </location>
</feature>
<feature type="region of interest" description="Lon-protease-like" evidence="1">
    <location>
        <begin position="350"/>
        <end position="455"/>
    </location>
</feature>
<feature type="short sequence motif" description="RadA KNRFG motif" evidence="1">
    <location>
        <begin position="250"/>
        <end position="254"/>
    </location>
</feature>
<feature type="binding site" evidence="1">
    <location>
        <begin position="97"/>
        <end position="104"/>
    </location>
    <ligand>
        <name>ATP</name>
        <dbReference type="ChEBI" id="CHEBI:30616"/>
    </ligand>
</feature>
<organism>
    <name type="scientific">Treponema pallidum (strain Nichols)</name>
    <dbReference type="NCBI Taxonomy" id="243276"/>
    <lineage>
        <taxon>Bacteria</taxon>
        <taxon>Pseudomonadati</taxon>
        <taxon>Spirochaetota</taxon>
        <taxon>Spirochaetia</taxon>
        <taxon>Spirochaetales</taxon>
        <taxon>Treponemataceae</taxon>
        <taxon>Treponema</taxon>
    </lineage>
</organism>